<protein>
    <recommendedName>
        <fullName evidence="1">Putative pyruvate, phosphate dikinase regulatory protein</fullName>
        <shortName evidence="1">PPDK regulatory protein</shortName>
        <ecNumber evidence="1">2.7.11.32</ecNumber>
        <ecNumber evidence="1">2.7.4.27</ecNumber>
    </recommendedName>
</protein>
<keyword id="KW-0418">Kinase</keyword>
<keyword id="KW-0547">Nucleotide-binding</keyword>
<keyword id="KW-0723">Serine/threonine-protein kinase</keyword>
<keyword id="KW-0808">Transferase</keyword>
<gene>
    <name type="ordered locus">RPA0298</name>
</gene>
<proteinExistence type="inferred from homology"/>
<evidence type="ECO:0000255" key="1">
    <source>
        <dbReference type="HAMAP-Rule" id="MF_00921"/>
    </source>
</evidence>
<comment type="function">
    <text evidence="1">Bifunctional serine/threonine kinase and phosphorylase involved in the regulation of the pyruvate, phosphate dikinase (PPDK) by catalyzing its phosphorylation/dephosphorylation.</text>
</comment>
<comment type="catalytic activity">
    <reaction evidence="1">
        <text>N(tele)-phospho-L-histidyl/L-threonyl-[pyruvate, phosphate dikinase] + ADP = N(tele)-phospho-L-histidyl/O-phospho-L-threonyl-[pyruvate, phosphate dikinase] + AMP + H(+)</text>
        <dbReference type="Rhea" id="RHEA:43692"/>
        <dbReference type="Rhea" id="RHEA-COMP:10650"/>
        <dbReference type="Rhea" id="RHEA-COMP:10651"/>
        <dbReference type="ChEBI" id="CHEBI:15378"/>
        <dbReference type="ChEBI" id="CHEBI:30013"/>
        <dbReference type="ChEBI" id="CHEBI:61977"/>
        <dbReference type="ChEBI" id="CHEBI:83586"/>
        <dbReference type="ChEBI" id="CHEBI:456215"/>
        <dbReference type="ChEBI" id="CHEBI:456216"/>
        <dbReference type="EC" id="2.7.11.32"/>
    </reaction>
</comment>
<comment type="catalytic activity">
    <reaction evidence="1">
        <text>N(tele)-phospho-L-histidyl/O-phospho-L-threonyl-[pyruvate, phosphate dikinase] + phosphate + H(+) = N(tele)-phospho-L-histidyl/L-threonyl-[pyruvate, phosphate dikinase] + diphosphate</text>
        <dbReference type="Rhea" id="RHEA:43696"/>
        <dbReference type="Rhea" id="RHEA-COMP:10650"/>
        <dbReference type="Rhea" id="RHEA-COMP:10651"/>
        <dbReference type="ChEBI" id="CHEBI:15378"/>
        <dbReference type="ChEBI" id="CHEBI:30013"/>
        <dbReference type="ChEBI" id="CHEBI:33019"/>
        <dbReference type="ChEBI" id="CHEBI:43474"/>
        <dbReference type="ChEBI" id="CHEBI:61977"/>
        <dbReference type="ChEBI" id="CHEBI:83586"/>
        <dbReference type="EC" id="2.7.4.27"/>
    </reaction>
</comment>
<comment type="similarity">
    <text evidence="1">Belongs to the pyruvate, phosphate/water dikinase regulatory protein family. PDRP subfamily.</text>
</comment>
<name>PDRP_RHOPA</name>
<dbReference type="EC" id="2.7.11.32" evidence="1"/>
<dbReference type="EC" id="2.7.4.27" evidence="1"/>
<dbReference type="EMBL" id="BX572593">
    <property type="protein sequence ID" value="CAE25742.1"/>
    <property type="molecule type" value="Genomic_DNA"/>
</dbReference>
<dbReference type="RefSeq" id="WP_011155866.1">
    <property type="nucleotide sequence ID" value="NZ_CP116810.1"/>
</dbReference>
<dbReference type="SMR" id="Q6ND11"/>
<dbReference type="STRING" id="258594.RPA0298"/>
<dbReference type="GeneID" id="66891308"/>
<dbReference type="eggNOG" id="COG1806">
    <property type="taxonomic scope" value="Bacteria"/>
</dbReference>
<dbReference type="HOGENOM" id="CLU_046206_2_0_5"/>
<dbReference type="PhylomeDB" id="Q6ND11"/>
<dbReference type="GO" id="GO:0043531">
    <property type="term" value="F:ADP binding"/>
    <property type="evidence" value="ECO:0007669"/>
    <property type="project" value="UniProtKB-UniRule"/>
</dbReference>
<dbReference type="GO" id="GO:0005524">
    <property type="term" value="F:ATP binding"/>
    <property type="evidence" value="ECO:0007669"/>
    <property type="project" value="InterPro"/>
</dbReference>
<dbReference type="GO" id="GO:0016776">
    <property type="term" value="F:phosphotransferase activity, phosphate group as acceptor"/>
    <property type="evidence" value="ECO:0007669"/>
    <property type="project" value="UniProtKB-UniRule"/>
</dbReference>
<dbReference type="GO" id="GO:0004674">
    <property type="term" value="F:protein serine/threonine kinase activity"/>
    <property type="evidence" value="ECO:0007669"/>
    <property type="project" value="UniProtKB-UniRule"/>
</dbReference>
<dbReference type="HAMAP" id="MF_00921">
    <property type="entry name" value="PDRP"/>
    <property type="match status" value="1"/>
</dbReference>
<dbReference type="InterPro" id="IPR005177">
    <property type="entry name" value="Kinase-pyrophosphorylase"/>
</dbReference>
<dbReference type="InterPro" id="IPR026565">
    <property type="entry name" value="PPDK_reg"/>
</dbReference>
<dbReference type="NCBIfam" id="NF003742">
    <property type="entry name" value="PRK05339.1"/>
    <property type="match status" value="1"/>
</dbReference>
<dbReference type="PANTHER" id="PTHR31756">
    <property type="entry name" value="PYRUVATE, PHOSPHATE DIKINASE REGULATORY PROTEIN 1, CHLOROPLASTIC"/>
    <property type="match status" value="1"/>
</dbReference>
<dbReference type="PANTHER" id="PTHR31756:SF3">
    <property type="entry name" value="PYRUVATE, PHOSPHATE DIKINASE REGULATORY PROTEIN 1, CHLOROPLASTIC"/>
    <property type="match status" value="1"/>
</dbReference>
<dbReference type="Pfam" id="PF03618">
    <property type="entry name" value="Kinase-PPPase"/>
    <property type="match status" value="1"/>
</dbReference>
<reference key="1">
    <citation type="journal article" date="2004" name="Nat. Biotechnol.">
        <title>Complete genome sequence of the metabolically versatile photosynthetic bacterium Rhodopseudomonas palustris.</title>
        <authorList>
            <person name="Larimer F.W."/>
            <person name="Chain P."/>
            <person name="Hauser L."/>
            <person name="Lamerdin J.E."/>
            <person name="Malfatti S."/>
            <person name="Do L."/>
            <person name="Land M.L."/>
            <person name="Pelletier D.A."/>
            <person name="Beatty J.T."/>
            <person name="Lang A.S."/>
            <person name="Tabita F.R."/>
            <person name="Gibson J.L."/>
            <person name="Hanson T.E."/>
            <person name="Bobst C."/>
            <person name="Torres y Torres J.L."/>
            <person name="Peres C."/>
            <person name="Harrison F.H."/>
            <person name="Gibson J."/>
            <person name="Harwood C.S."/>
        </authorList>
    </citation>
    <scope>NUCLEOTIDE SEQUENCE [LARGE SCALE GENOMIC DNA]</scope>
    <source>
        <strain>ATCC BAA-98 / CGA009</strain>
    </source>
</reference>
<sequence length="279" mass="30864">MLTDGSYFHLHLVSDSTGETLITVSRAVTAQYANVTPVEHVYPLVRSQKQLDRVLQEIEEAPGIVLFTLLETELVNRLEAKCQEINSPSLSIIGPVMQLFEAYLGASTMGRVGAQHTLNAEYFQRIDALNYSMMHDDGQHVEGLEEADVVLVGVSRTSKTPTSIYLANRGIRTANVPLVAGIPIPHQLETLKKPLVVSLHASPERLIQVRQNRLLSLGAGSGNDSYIDRQAVTDEVLLARKLSAKYGWSLLDVTRRSIEETAAAIMKLLADRQRQRVPE</sequence>
<accession>Q6ND11</accession>
<organism>
    <name type="scientific">Rhodopseudomonas palustris (strain ATCC BAA-98 / CGA009)</name>
    <dbReference type="NCBI Taxonomy" id="258594"/>
    <lineage>
        <taxon>Bacteria</taxon>
        <taxon>Pseudomonadati</taxon>
        <taxon>Pseudomonadota</taxon>
        <taxon>Alphaproteobacteria</taxon>
        <taxon>Hyphomicrobiales</taxon>
        <taxon>Nitrobacteraceae</taxon>
        <taxon>Rhodopseudomonas</taxon>
    </lineage>
</organism>
<feature type="chain" id="PRO_0000196700" description="Putative pyruvate, phosphate dikinase regulatory protein">
    <location>
        <begin position="1"/>
        <end position="279"/>
    </location>
</feature>
<feature type="binding site" evidence="1">
    <location>
        <begin position="153"/>
        <end position="160"/>
    </location>
    <ligand>
        <name>ADP</name>
        <dbReference type="ChEBI" id="CHEBI:456216"/>
    </ligand>
</feature>